<organism>
    <name type="scientific">Arabidopsis thaliana</name>
    <name type="common">Mouse-ear cress</name>
    <dbReference type="NCBI Taxonomy" id="3702"/>
    <lineage>
        <taxon>Eukaryota</taxon>
        <taxon>Viridiplantae</taxon>
        <taxon>Streptophyta</taxon>
        <taxon>Embryophyta</taxon>
        <taxon>Tracheophyta</taxon>
        <taxon>Spermatophyta</taxon>
        <taxon>Magnoliopsida</taxon>
        <taxon>eudicotyledons</taxon>
        <taxon>Gunneridae</taxon>
        <taxon>Pentapetalae</taxon>
        <taxon>rosids</taxon>
        <taxon>malvids</taxon>
        <taxon>Brassicales</taxon>
        <taxon>Brassicaceae</taxon>
        <taxon>Camelineae</taxon>
        <taxon>Arabidopsis</taxon>
    </lineage>
</organism>
<sequence length="614" mass="69603">MSGPVDRFAIPCFEGILSSDEKKERKSDFENSEDERRTRIGSLKKKAINASTKFKHSLKKKRRKSDVRVSSVSIEDVRDVEELQAVDEFRQALVMEELLPHKHDDYHMMLRFLKARKFDIEKAKHMWADMIQWRKEFGTDTIIQDFQFEEIDEVLKYYPHGYHSVDKEGRPVYIERLGKVDPNKLMQVTTLDRYIRYHVKEFERSFMLKFPACTIAAKKYIDSSTTILDVQGVGLKNFTKSARELITRLQKIDGDNYPETLHQMFIINAGPGFRLLWSTVKSFLDPKTTSKIHVLGCKYQSKLLEIIDSSELPEFLGGACTCADQGGCMLSDKGPWKNPEIVKMVLHGGAHRAKQVVKVLNSDGKVIAYAKPSYPWIKGSDTSTAESGSEAEDIVVSPKAVKSYSHLRLTPVREEAKVGSGETSFAGSFAGYDEYVPMVDKAVDATWKVKPTAINRAPSKGAHMPPNVPKDHESFSARVLVTFMAFVMAILTFFRTVSNRVVTKQLPPPPSQPQIEGSAAAEEADLLNSVLKKLTELEEKIGALQSKPSEMPYEKEELLNAAVCRVDALEAELIATKKALYEALMRQEELLAYIDRQEAAQHQKKNKRKQMFCF</sequence>
<accession>F4JVA6</accession>
<accession>Q94C34</accession>
<accession>Q9T026</accession>
<evidence type="ECO:0000250" key="1"/>
<evidence type="ECO:0000255" key="2"/>
<evidence type="ECO:0000255" key="3">
    <source>
        <dbReference type="PROSITE-ProRule" id="PRU00056"/>
    </source>
</evidence>
<evidence type="ECO:0000256" key="4">
    <source>
        <dbReference type="SAM" id="MobiDB-lite"/>
    </source>
</evidence>
<evidence type="ECO:0000305" key="5"/>
<dbReference type="EMBL" id="AL050351">
    <property type="protein sequence ID" value="CAB43632.1"/>
    <property type="status" value="ALT_SEQ"/>
    <property type="molecule type" value="Genomic_DNA"/>
</dbReference>
<dbReference type="EMBL" id="AL161594">
    <property type="protein sequence ID" value="CAB80580.1"/>
    <property type="status" value="ALT_SEQ"/>
    <property type="molecule type" value="Genomic_DNA"/>
</dbReference>
<dbReference type="EMBL" id="CP002687">
    <property type="protein sequence ID" value="AEE87031.1"/>
    <property type="molecule type" value="Genomic_DNA"/>
</dbReference>
<dbReference type="EMBL" id="AY037182">
    <property type="protein sequence ID" value="AAK59767.1"/>
    <property type="status" value="ALT_FRAME"/>
    <property type="molecule type" value="mRNA"/>
</dbReference>
<dbReference type="EMBL" id="AY133598">
    <property type="protein sequence ID" value="AAM91428.1"/>
    <property type="status" value="ALT_FRAME"/>
    <property type="molecule type" value="mRNA"/>
</dbReference>
<dbReference type="PIR" id="T08565">
    <property type="entry name" value="T08565"/>
</dbReference>
<dbReference type="RefSeq" id="NP_568054.1">
    <molecule id="F4JVA6-1"/>
    <property type="nucleotide sequence ID" value="NM_120077.4"/>
</dbReference>
<dbReference type="SMR" id="F4JVA6"/>
<dbReference type="FunCoup" id="F4JVA6">
    <property type="interactions" value="870"/>
</dbReference>
<dbReference type="STRING" id="3702.F4JVA6"/>
<dbReference type="iPTMnet" id="F4JVA6"/>
<dbReference type="PaxDb" id="3702-AT4G39170.1"/>
<dbReference type="ProteomicsDB" id="232677">
    <molecule id="F4JVA6-1"/>
</dbReference>
<dbReference type="EnsemblPlants" id="AT4G39170.1">
    <molecule id="F4JVA6-1"/>
    <property type="protein sequence ID" value="AT4G39170.1"/>
    <property type="gene ID" value="AT4G39170"/>
</dbReference>
<dbReference type="GeneID" id="830072"/>
<dbReference type="Gramene" id="AT4G39170.1">
    <molecule id="F4JVA6-1"/>
    <property type="protein sequence ID" value="AT4G39170.1"/>
    <property type="gene ID" value="AT4G39170"/>
</dbReference>
<dbReference type="KEGG" id="ath:AT4G39170"/>
<dbReference type="Araport" id="AT4G39170"/>
<dbReference type="TAIR" id="AT4G39170"/>
<dbReference type="eggNOG" id="KOG1471">
    <property type="taxonomic scope" value="Eukaryota"/>
</dbReference>
<dbReference type="InParanoid" id="F4JVA6"/>
<dbReference type="OMA" id="VQEFTFD"/>
<dbReference type="OrthoDB" id="1434354at2759"/>
<dbReference type="PRO" id="PR:F4JVA6"/>
<dbReference type="Proteomes" id="UP000006548">
    <property type="component" value="Chromosome 4"/>
</dbReference>
<dbReference type="ExpressionAtlas" id="F4JVA6">
    <property type="expression patterns" value="baseline and differential"/>
</dbReference>
<dbReference type="GO" id="GO:0000139">
    <property type="term" value="C:Golgi membrane"/>
    <property type="evidence" value="ECO:0007669"/>
    <property type="project" value="UniProtKB-SubCell"/>
</dbReference>
<dbReference type="GO" id="GO:0005886">
    <property type="term" value="C:plasma membrane"/>
    <property type="evidence" value="ECO:0007669"/>
    <property type="project" value="UniProtKB-SubCell"/>
</dbReference>
<dbReference type="GO" id="GO:0015031">
    <property type="term" value="P:protein transport"/>
    <property type="evidence" value="ECO:0007669"/>
    <property type="project" value="UniProtKB-KW"/>
</dbReference>
<dbReference type="CDD" id="cd00170">
    <property type="entry name" value="SEC14"/>
    <property type="match status" value="1"/>
</dbReference>
<dbReference type="FunFam" id="3.40.525.10:FF:000011">
    <property type="entry name" value="SEC14 cytosolic factor"/>
    <property type="match status" value="1"/>
</dbReference>
<dbReference type="Gene3D" id="3.40.525.10">
    <property type="entry name" value="CRAL-TRIO lipid binding domain"/>
    <property type="match status" value="1"/>
</dbReference>
<dbReference type="Gene3D" id="1.10.8.20">
    <property type="entry name" value="N-terminal domain of phosphatidylinositol transfer protein sec14p"/>
    <property type="match status" value="1"/>
</dbReference>
<dbReference type="InterPro" id="IPR001251">
    <property type="entry name" value="CRAL-TRIO_dom"/>
</dbReference>
<dbReference type="InterPro" id="IPR036865">
    <property type="entry name" value="CRAL-TRIO_dom_sf"/>
</dbReference>
<dbReference type="InterPro" id="IPR011074">
    <property type="entry name" value="CRAL/TRIO_N_dom"/>
</dbReference>
<dbReference type="InterPro" id="IPR036273">
    <property type="entry name" value="CRAL/TRIO_N_dom_sf"/>
</dbReference>
<dbReference type="InterPro" id="IPR051026">
    <property type="entry name" value="PI/PC_transfer"/>
</dbReference>
<dbReference type="PANTHER" id="PTHR45657">
    <property type="entry name" value="CRAL-TRIO DOMAIN-CONTAINING PROTEIN YKL091C-RELATED"/>
    <property type="match status" value="1"/>
</dbReference>
<dbReference type="PANTHER" id="PTHR45657:SF5">
    <property type="entry name" value="PHOSPHATIDYLINOSITOL_PHOSPHATIDYLCHOLINE TRANSFER PROTEIN SFH6"/>
    <property type="match status" value="1"/>
</dbReference>
<dbReference type="Pfam" id="PF00650">
    <property type="entry name" value="CRAL_TRIO"/>
    <property type="match status" value="1"/>
</dbReference>
<dbReference type="Pfam" id="PF03765">
    <property type="entry name" value="CRAL_TRIO_N"/>
    <property type="match status" value="1"/>
</dbReference>
<dbReference type="PRINTS" id="PR00180">
    <property type="entry name" value="CRETINALDHBP"/>
</dbReference>
<dbReference type="SMART" id="SM01100">
    <property type="entry name" value="CRAL_TRIO_N"/>
    <property type="match status" value="1"/>
</dbReference>
<dbReference type="SMART" id="SM00516">
    <property type="entry name" value="SEC14"/>
    <property type="match status" value="1"/>
</dbReference>
<dbReference type="SUPFAM" id="SSF52087">
    <property type="entry name" value="CRAL/TRIO domain"/>
    <property type="match status" value="1"/>
</dbReference>
<dbReference type="SUPFAM" id="SSF46938">
    <property type="entry name" value="CRAL/TRIO N-terminal domain"/>
    <property type="match status" value="1"/>
</dbReference>
<dbReference type="PROSITE" id="PS50191">
    <property type="entry name" value="CRAL_TRIO"/>
    <property type="match status" value="1"/>
</dbReference>
<gene>
    <name type="primary">SFH6</name>
    <name type="ordered locus">At4g39170</name>
    <name type="ORF">T22F8.70</name>
</gene>
<keyword id="KW-0025">Alternative splicing</keyword>
<keyword id="KW-1003">Cell membrane</keyword>
<keyword id="KW-0175">Coiled coil</keyword>
<keyword id="KW-0333">Golgi apparatus</keyword>
<keyword id="KW-0472">Membrane</keyword>
<keyword id="KW-0653">Protein transport</keyword>
<keyword id="KW-1185">Reference proteome</keyword>
<keyword id="KW-0813">Transport</keyword>
<feature type="chain" id="PRO_0000423466" description="Phosphatidylinositol/phosphatidylcholine transfer protein SFH6">
    <location>
        <begin position="1"/>
        <end position="614"/>
    </location>
</feature>
<feature type="domain" description="CRAL-TRIO" evidence="3">
    <location>
        <begin position="150"/>
        <end position="324"/>
    </location>
</feature>
<feature type="region of interest" description="Disordered" evidence="4">
    <location>
        <begin position="19"/>
        <end position="42"/>
    </location>
</feature>
<feature type="coiled-coil region" evidence="2">
    <location>
        <begin position="519"/>
        <end position="576"/>
    </location>
</feature>
<feature type="compositionally biased region" description="Basic and acidic residues" evidence="4">
    <location>
        <begin position="19"/>
        <end position="38"/>
    </location>
</feature>
<protein>
    <recommendedName>
        <fullName>Phosphatidylinositol/phosphatidylcholine transfer protein SFH6</fullName>
    </recommendedName>
    <alternativeName>
        <fullName>Protein SEC FOURTEEN HOMOLOGS 6</fullName>
        <shortName>AtSFH6</shortName>
    </alternativeName>
</protein>
<name>SFH6_ARATH</name>
<reference key="1">
    <citation type="journal article" date="1999" name="Nature">
        <title>Sequence and analysis of chromosome 4 of the plant Arabidopsis thaliana.</title>
        <authorList>
            <person name="Mayer K.F.X."/>
            <person name="Schueller C."/>
            <person name="Wambutt R."/>
            <person name="Murphy G."/>
            <person name="Volckaert G."/>
            <person name="Pohl T."/>
            <person name="Duesterhoeft A."/>
            <person name="Stiekema W."/>
            <person name="Entian K.-D."/>
            <person name="Terryn N."/>
            <person name="Harris B."/>
            <person name="Ansorge W."/>
            <person name="Brandt P."/>
            <person name="Grivell L.A."/>
            <person name="Rieger M."/>
            <person name="Weichselgartner M."/>
            <person name="de Simone V."/>
            <person name="Obermaier B."/>
            <person name="Mache R."/>
            <person name="Mueller M."/>
            <person name="Kreis M."/>
            <person name="Delseny M."/>
            <person name="Puigdomenech P."/>
            <person name="Watson M."/>
            <person name="Schmidtheini T."/>
            <person name="Reichert B."/>
            <person name="Portetelle D."/>
            <person name="Perez-Alonso M."/>
            <person name="Boutry M."/>
            <person name="Bancroft I."/>
            <person name="Vos P."/>
            <person name="Hoheisel J."/>
            <person name="Zimmermann W."/>
            <person name="Wedler H."/>
            <person name="Ridley P."/>
            <person name="Langham S.-A."/>
            <person name="McCullagh B."/>
            <person name="Bilham L."/>
            <person name="Robben J."/>
            <person name="van der Schueren J."/>
            <person name="Grymonprez B."/>
            <person name="Chuang Y.-J."/>
            <person name="Vandenbussche F."/>
            <person name="Braeken M."/>
            <person name="Weltjens I."/>
            <person name="Voet M."/>
            <person name="Bastiaens I."/>
            <person name="Aert R."/>
            <person name="Defoor E."/>
            <person name="Weitzenegger T."/>
            <person name="Bothe G."/>
            <person name="Ramsperger U."/>
            <person name="Hilbert H."/>
            <person name="Braun M."/>
            <person name="Holzer E."/>
            <person name="Brandt A."/>
            <person name="Peters S."/>
            <person name="van Staveren M."/>
            <person name="Dirkse W."/>
            <person name="Mooijman P."/>
            <person name="Klein Lankhorst R."/>
            <person name="Rose M."/>
            <person name="Hauf J."/>
            <person name="Koetter P."/>
            <person name="Berneiser S."/>
            <person name="Hempel S."/>
            <person name="Feldpausch M."/>
            <person name="Lamberth S."/>
            <person name="Van den Daele H."/>
            <person name="De Keyser A."/>
            <person name="Buysshaert C."/>
            <person name="Gielen J."/>
            <person name="Villarroel R."/>
            <person name="De Clercq R."/>
            <person name="van Montagu M."/>
            <person name="Rogers J."/>
            <person name="Cronin A."/>
            <person name="Quail M.A."/>
            <person name="Bray-Allen S."/>
            <person name="Clark L."/>
            <person name="Doggett J."/>
            <person name="Hall S."/>
            <person name="Kay M."/>
            <person name="Lennard N."/>
            <person name="McLay K."/>
            <person name="Mayes R."/>
            <person name="Pettett A."/>
            <person name="Rajandream M.A."/>
            <person name="Lyne M."/>
            <person name="Benes V."/>
            <person name="Rechmann S."/>
            <person name="Borkova D."/>
            <person name="Bloecker H."/>
            <person name="Scharfe M."/>
            <person name="Grimm M."/>
            <person name="Loehnert T.-H."/>
            <person name="Dose S."/>
            <person name="de Haan M."/>
            <person name="Maarse A.C."/>
            <person name="Schaefer M."/>
            <person name="Mueller-Auer S."/>
            <person name="Gabel C."/>
            <person name="Fuchs M."/>
            <person name="Fartmann B."/>
            <person name="Granderath K."/>
            <person name="Dauner D."/>
            <person name="Herzl A."/>
            <person name="Neumann S."/>
            <person name="Argiriou A."/>
            <person name="Vitale D."/>
            <person name="Liguori R."/>
            <person name="Piravandi E."/>
            <person name="Massenet O."/>
            <person name="Quigley F."/>
            <person name="Clabauld G."/>
            <person name="Muendlein A."/>
            <person name="Felber R."/>
            <person name="Schnabl S."/>
            <person name="Hiller R."/>
            <person name="Schmidt W."/>
            <person name="Lecharny A."/>
            <person name="Aubourg S."/>
            <person name="Chefdor F."/>
            <person name="Cooke R."/>
            <person name="Berger C."/>
            <person name="Monfort A."/>
            <person name="Casacuberta E."/>
            <person name="Gibbons T."/>
            <person name="Weber N."/>
            <person name="Vandenbol M."/>
            <person name="Bargues M."/>
            <person name="Terol J."/>
            <person name="Torres A."/>
            <person name="Perez-Perez A."/>
            <person name="Purnelle B."/>
            <person name="Bent E."/>
            <person name="Johnson S."/>
            <person name="Tacon D."/>
            <person name="Jesse T."/>
            <person name="Heijnen L."/>
            <person name="Schwarz S."/>
            <person name="Scholler P."/>
            <person name="Heber S."/>
            <person name="Francs P."/>
            <person name="Bielke C."/>
            <person name="Frishman D."/>
            <person name="Haase D."/>
            <person name="Lemcke K."/>
            <person name="Mewes H.-W."/>
            <person name="Stocker S."/>
            <person name="Zaccaria P."/>
            <person name="Bevan M."/>
            <person name="Wilson R.K."/>
            <person name="de la Bastide M."/>
            <person name="Habermann K."/>
            <person name="Parnell L."/>
            <person name="Dedhia N."/>
            <person name="Gnoj L."/>
            <person name="Schutz K."/>
            <person name="Huang E."/>
            <person name="Spiegel L."/>
            <person name="Sekhon M."/>
            <person name="Murray J."/>
            <person name="Sheet P."/>
            <person name="Cordes M."/>
            <person name="Abu-Threideh J."/>
            <person name="Stoneking T."/>
            <person name="Kalicki J."/>
            <person name="Graves T."/>
            <person name="Harmon G."/>
            <person name="Edwards J."/>
            <person name="Latreille P."/>
            <person name="Courtney L."/>
            <person name="Cloud J."/>
            <person name="Abbott A."/>
            <person name="Scott K."/>
            <person name="Johnson D."/>
            <person name="Minx P."/>
            <person name="Bentley D."/>
            <person name="Fulton B."/>
            <person name="Miller N."/>
            <person name="Greco T."/>
            <person name="Kemp K."/>
            <person name="Kramer J."/>
            <person name="Fulton L."/>
            <person name="Mardis E."/>
            <person name="Dante M."/>
            <person name="Pepin K."/>
            <person name="Hillier L.W."/>
            <person name="Nelson J."/>
            <person name="Spieth J."/>
            <person name="Ryan E."/>
            <person name="Andrews S."/>
            <person name="Geisel C."/>
            <person name="Layman D."/>
            <person name="Du H."/>
            <person name="Ali J."/>
            <person name="Berghoff A."/>
            <person name="Jones K."/>
            <person name="Drone K."/>
            <person name="Cotton M."/>
            <person name="Joshu C."/>
            <person name="Antonoiu B."/>
            <person name="Zidanic M."/>
            <person name="Strong C."/>
            <person name="Sun H."/>
            <person name="Lamar B."/>
            <person name="Yordan C."/>
            <person name="Ma P."/>
            <person name="Zhong J."/>
            <person name="Preston R."/>
            <person name="Vil D."/>
            <person name="Shekher M."/>
            <person name="Matero A."/>
            <person name="Shah R."/>
            <person name="Swaby I.K."/>
            <person name="O'Shaughnessy A."/>
            <person name="Rodriguez M."/>
            <person name="Hoffman J."/>
            <person name="Till S."/>
            <person name="Granat S."/>
            <person name="Shohdy N."/>
            <person name="Hasegawa A."/>
            <person name="Hameed A."/>
            <person name="Lodhi M."/>
            <person name="Johnson A."/>
            <person name="Chen E."/>
            <person name="Marra M.A."/>
            <person name="Martienssen R."/>
            <person name="McCombie W.R."/>
        </authorList>
    </citation>
    <scope>NUCLEOTIDE SEQUENCE [LARGE SCALE GENOMIC DNA]</scope>
    <source>
        <strain>cv. Columbia</strain>
    </source>
</reference>
<reference key="2">
    <citation type="journal article" date="2017" name="Plant J.">
        <title>Araport11: a complete reannotation of the Arabidopsis thaliana reference genome.</title>
        <authorList>
            <person name="Cheng C.Y."/>
            <person name="Krishnakumar V."/>
            <person name="Chan A.P."/>
            <person name="Thibaud-Nissen F."/>
            <person name="Schobel S."/>
            <person name="Town C.D."/>
        </authorList>
    </citation>
    <scope>GENOME REANNOTATION</scope>
    <source>
        <strain>cv. Columbia</strain>
    </source>
</reference>
<reference key="3">
    <citation type="journal article" date="2003" name="Science">
        <title>Empirical analysis of transcriptional activity in the Arabidopsis genome.</title>
        <authorList>
            <person name="Yamada K."/>
            <person name="Lim J."/>
            <person name="Dale J.M."/>
            <person name="Chen H."/>
            <person name="Shinn P."/>
            <person name="Palm C.J."/>
            <person name="Southwick A.M."/>
            <person name="Wu H.C."/>
            <person name="Kim C.J."/>
            <person name="Nguyen M."/>
            <person name="Pham P.K."/>
            <person name="Cheuk R.F."/>
            <person name="Karlin-Newmann G."/>
            <person name="Liu S.X."/>
            <person name="Lam B."/>
            <person name="Sakano H."/>
            <person name="Wu T."/>
            <person name="Yu G."/>
            <person name="Miranda M."/>
            <person name="Quach H.L."/>
            <person name="Tripp M."/>
            <person name="Chang C.H."/>
            <person name="Lee J.M."/>
            <person name="Toriumi M.J."/>
            <person name="Chan M.M."/>
            <person name="Tang C.C."/>
            <person name="Onodera C.S."/>
            <person name="Deng J.M."/>
            <person name="Akiyama K."/>
            <person name="Ansari Y."/>
            <person name="Arakawa T."/>
            <person name="Banh J."/>
            <person name="Banno F."/>
            <person name="Bowser L."/>
            <person name="Brooks S.Y."/>
            <person name="Carninci P."/>
            <person name="Chao Q."/>
            <person name="Choy N."/>
            <person name="Enju A."/>
            <person name="Goldsmith A.D."/>
            <person name="Gurjal M."/>
            <person name="Hansen N.F."/>
            <person name="Hayashizaki Y."/>
            <person name="Johnson-Hopson C."/>
            <person name="Hsuan V.W."/>
            <person name="Iida K."/>
            <person name="Karnes M."/>
            <person name="Khan S."/>
            <person name="Koesema E."/>
            <person name="Ishida J."/>
            <person name="Jiang P.X."/>
            <person name="Jones T."/>
            <person name="Kawai J."/>
            <person name="Kamiya A."/>
            <person name="Meyers C."/>
            <person name="Nakajima M."/>
            <person name="Narusaka M."/>
            <person name="Seki M."/>
            <person name="Sakurai T."/>
            <person name="Satou M."/>
            <person name="Tamse R."/>
            <person name="Vaysberg M."/>
            <person name="Wallender E.K."/>
            <person name="Wong C."/>
            <person name="Yamamura Y."/>
            <person name="Yuan S."/>
            <person name="Shinozaki K."/>
            <person name="Davis R.W."/>
            <person name="Theologis A."/>
            <person name="Ecker J.R."/>
        </authorList>
    </citation>
    <scope>NUCLEOTIDE SEQUENCE [LARGE SCALE MRNA]</scope>
    <source>
        <strain>cv. Columbia</strain>
    </source>
</reference>
<reference key="4">
    <citation type="journal article" date="2005" name="J. Cell Biol.">
        <title>A Sec14p-nodulin domain phosphatidylinositol transfer protein polarizes membrane growth of Arabidopsis thaliana root hairs.</title>
        <authorList>
            <person name="Vincent P."/>
            <person name="Chua M."/>
            <person name="Nogue F."/>
            <person name="Fairbrother A."/>
            <person name="Mekeel H."/>
            <person name="Xu Y."/>
            <person name="Allen N."/>
            <person name="Bibikova T.N."/>
            <person name="Gilroy S."/>
            <person name="Bankaitis V.A."/>
        </authorList>
    </citation>
    <scope>GENE FAMILY</scope>
</reference>
<reference key="5">
    <citation type="journal article" date="2006" name="Nat. Chem. Biol.">
        <title>Phosphatidylinositol transfer proteins and cellular nanoreactors for lipid signaling.</title>
        <authorList>
            <person name="Ile K.E."/>
            <person name="Schaaf G."/>
            <person name="Bankaitis V.A."/>
        </authorList>
    </citation>
    <scope>REVIEW</scope>
</reference>
<comment type="function">
    <text evidence="1">Required for transport of secretory proteins from the Golgi complex. Catalyzes the transfer of phosphatidylinositol and phosphatidylcholine between membranes in vitro (By similarity).</text>
</comment>
<comment type="subcellular location">
    <subcellularLocation>
        <location evidence="1">Golgi apparatus membrane</location>
        <topology evidence="1">Peripheral membrane protein</topology>
    </subcellularLocation>
    <subcellularLocation>
        <location evidence="1">Cell membrane</location>
        <topology evidence="1">Peripheral membrane protein</topology>
    </subcellularLocation>
</comment>
<comment type="alternative products">
    <event type="alternative splicing"/>
    <isoform>
        <id>F4JVA6-1</id>
        <name>1</name>
        <sequence type="displayed"/>
    </isoform>
    <text>A number of isoforms are produced. According to EST sequences.</text>
</comment>
<comment type="similarity">
    <text evidence="5">Belongs to the SFH family.</text>
</comment>
<comment type="sequence caution" evidence="5">
    <conflict type="frameshift">
        <sequence resource="EMBL-CDS" id="AAK59767"/>
    </conflict>
</comment>
<comment type="sequence caution" evidence="5">
    <conflict type="frameshift">
        <sequence resource="EMBL-CDS" id="AAM91428"/>
    </conflict>
</comment>
<comment type="sequence caution" evidence="5">
    <conflict type="erroneous gene model prediction">
        <sequence resource="EMBL-CDS" id="CAB43632"/>
    </conflict>
</comment>
<comment type="sequence caution" evidence="5">
    <conflict type="erroneous gene model prediction">
        <sequence resource="EMBL-CDS" id="CAB80580"/>
    </conflict>
</comment>
<proteinExistence type="evidence at transcript level"/>